<evidence type="ECO:0000250" key="1">
    <source>
        <dbReference type="UniProtKB" id="A9XFX6"/>
    </source>
</evidence>
<evidence type="ECO:0000269" key="2">
    <source>
    </source>
</evidence>
<evidence type="ECO:0000305" key="3"/>
<evidence type="ECO:0007829" key="4">
    <source>
        <dbReference type="PDB" id="4AKR"/>
    </source>
</evidence>
<reference key="1">
    <citation type="journal article" date="1989" name="J. Biol. Chem.">
        <title>Ca2+-independent F-actin capping proteins. Cap 32/34, a capping protein from Dictyostelium discoideum, does not share sequence homologies with known actin-binding proteins.</title>
        <authorList>
            <person name="Hartmann H."/>
            <person name="Noegel A.A."/>
            <person name="Eckerskorn C."/>
            <person name="Rapp S."/>
            <person name="Schleicher M."/>
        </authorList>
    </citation>
    <scope>NUCLEOTIDE SEQUENCE [MRNA]</scope>
    <scope>PARTIAL PROTEIN SEQUENCE</scope>
</reference>
<reference key="2">
    <citation type="journal article" date="1990" name="Dev. Genet.">
        <title>Heterodimeric capping proteins constitute a highly conserved group of actin-binding proteins.</title>
        <authorList>
            <person name="Hartmann H."/>
            <person name="Schleicher M."/>
            <person name="Noegel A.A."/>
        </authorList>
    </citation>
    <scope>NUCLEOTIDE SEQUENCE [MRNA]</scope>
</reference>
<reference key="3">
    <citation type="journal article" date="2005" name="Nature">
        <title>The genome of the social amoeba Dictyostelium discoideum.</title>
        <authorList>
            <person name="Eichinger L."/>
            <person name="Pachebat J.A."/>
            <person name="Gloeckner G."/>
            <person name="Rajandream M.A."/>
            <person name="Sucgang R."/>
            <person name="Berriman M."/>
            <person name="Song J."/>
            <person name="Olsen R."/>
            <person name="Szafranski K."/>
            <person name="Xu Q."/>
            <person name="Tunggal B."/>
            <person name="Kummerfeld S."/>
            <person name="Madera M."/>
            <person name="Konfortov B.A."/>
            <person name="Rivero F."/>
            <person name="Bankier A.T."/>
            <person name="Lehmann R."/>
            <person name="Hamlin N."/>
            <person name="Davies R."/>
            <person name="Gaudet P."/>
            <person name="Fey P."/>
            <person name="Pilcher K."/>
            <person name="Chen G."/>
            <person name="Saunders D."/>
            <person name="Sodergren E.J."/>
            <person name="Davis P."/>
            <person name="Kerhornou A."/>
            <person name="Nie X."/>
            <person name="Hall N."/>
            <person name="Anjard C."/>
            <person name="Hemphill L."/>
            <person name="Bason N."/>
            <person name="Farbrother P."/>
            <person name="Desany B."/>
            <person name="Just E."/>
            <person name="Morio T."/>
            <person name="Rost R."/>
            <person name="Churcher C.M."/>
            <person name="Cooper J."/>
            <person name="Haydock S."/>
            <person name="van Driessche N."/>
            <person name="Cronin A."/>
            <person name="Goodhead I."/>
            <person name="Muzny D.M."/>
            <person name="Mourier T."/>
            <person name="Pain A."/>
            <person name="Lu M."/>
            <person name="Harper D."/>
            <person name="Lindsay R."/>
            <person name="Hauser H."/>
            <person name="James K.D."/>
            <person name="Quiles M."/>
            <person name="Madan Babu M."/>
            <person name="Saito T."/>
            <person name="Buchrieser C."/>
            <person name="Wardroper A."/>
            <person name="Felder M."/>
            <person name="Thangavelu M."/>
            <person name="Johnson D."/>
            <person name="Knights A."/>
            <person name="Loulseged H."/>
            <person name="Mungall K.L."/>
            <person name="Oliver K."/>
            <person name="Price C."/>
            <person name="Quail M.A."/>
            <person name="Urushihara H."/>
            <person name="Hernandez J."/>
            <person name="Rabbinowitsch E."/>
            <person name="Steffen D."/>
            <person name="Sanders M."/>
            <person name="Ma J."/>
            <person name="Kohara Y."/>
            <person name="Sharp S."/>
            <person name="Simmonds M.N."/>
            <person name="Spiegler S."/>
            <person name="Tivey A."/>
            <person name="Sugano S."/>
            <person name="White B."/>
            <person name="Walker D."/>
            <person name="Woodward J.R."/>
            <person name="Winckler T."/>
            <person name="Tanaka Y."/>
            <person name="Shaulsky G."/>
            <person name="Schleicher M."/>
            <person name="Weinstock G.M."/>
            <person name="Rosenthal A."/>
            <person name="Cox E.C."/>
            <person name="Chisholm R.L."/>
            <person name="Gibbs R.A."/>
            <person name="Loomis W.F."/>
            <person name="Platzer M."/>
            <person name="Kay R.R."/>
            <person name="Williams J.G."/>
            <person name="Dear P.H."/>
            <person name="Noegel A.A."/>
            <person name="Barrell B.G."/>
            <person name="Kuspa A."/>
        </authorList>
    </citation>
    <scope>NUCLEOTIDE SEQUENCE [LARGE SCALE GENOMIC DNA]</scope>
    <source>
        <strain>AX4</strain>
    </source>
</reference>
<reference key="4">
    <citation type="journal article" date="1996" name="Biochim. Biophys. Acta">
        <title>A major agonist-regulated capping activity in Dictyostelium is due to the capping protein, cap32/34.</title>
        <authorList>
            <person name="Eddy R.J."/>
            <person name="Han J."/>
            <person name="Sauterer R.A."/>
            <person name="Condeelis J.S."/>
        </authorList>
    </citation>
    <scope>FUNCTION</scope>
</reference>
<dbReference type="EMBL" id="M25131">
    <property type="protein sequence ID" value="AAA33175.1"/>
    <property type="molecule type" value="mRNA"/>
</dbReference>
<dbReference type="EMBL" id="AAFI02000003">
    <property type="protein sequence ID" value="EAL73139.1"/>
    <property type="molecule type" value="Genomic_DNA"/>
</dbReference>
<dbReference type="PIR" id="A61042">
    <property type="entry name" value="A61042"/>
</dbReference>
<dbReference type="RefSeq" id="XP_647630.1">
    <property type="nucleotide sequence ID" value="XM_642538.1"/>
</dbReference>
<dbReference type="PDB" id="4AKR">
    <property type="method" value="X-ray"/>
    <property type="resolution" value="2.20 A"/>
    <property type="chains" value="B/D=2-272"/>
</dbReference>
<dbReference type="PDBsum" id="4AKR"/>
<dbReference type="SMR" id="P13021"/>
<dbReference type="FunCoup" id="P13021">
    <property type="interactions" value="850"/>
</dbReference>
<dbReference type="STRING" id="44689.P13021"/>
<dbReference type="PaxDb" id="44689-DDB0191202"/>
<dbReference type="EnsemblProtists" id="EAL73139">
    <property type="protein sequence ID" value="EAL73139"/>
    <property type="gene ID" value="DDB_G0267374"/>
</dbReference>
<dbReference type="GeneID" id="8616445"/>
<dbReference type="KEGG" id="ddi:DDB_G0267374"/>
<dbReference type="dictyBase" id="DDB_G0267374">
    <property type="gene designation" value="acpA"/>
</dbReference>
<dbReference type="VEuPathDB" id="AmoebaDB:DDB_G0267374"/>
<dbReference type="eggNOG" id="KOG3174">
    <property type="taxonomic scope" value="Eukaryota"/>
</dbReference>
<dbReference type="HOGENOM" id="CLU_045864_1_1_1"/>
<dbReference type="InParanoid" id="P13021"/>
<dbReference type="OMA" id="WSNKYYP"/>
<dbReference type="PhylomeDB" id="P13021"/>
<dbReference type="Reactome" id="R-DDI-6807878">
    <property type="pathway name" value="COPI-mediated anterograde transport"/>
</dbReference>
<dbReference type="Reactome" id="R-DDI-983231">
    <property type="pathway name" value="Factors involved in megakaryocyte development and platelet production"/>
</dbReference>
<dbReference type="EvolutionaryTrace" id="P13021"/>
<dbReference type="PRO" id="PR:P13021"/>
<dbReference type="Proteomes" id="UP000002195">
    <property type="component" value="Chromosome 1"/>
</dbReference>
<dbReference type="GO" id="GO:0030864">
    <property type="term" value="C:cortical actin cytoskeleton"/>
    <property type="evidence" value="ECO:0000314"/>
    <property type="project" value="dictyBase"/>
</dbReference>
<dbReference type="GO" id="GO:0005829">
    <property type="term" value="C:cytosol"/>
    <property type="evidence" value="ECO:0000314"/>
    <property type="project" value="dictyBase"/>
</dbReference>
<dbReference type="GO" id="GO:0008290">
    <property type="term" value="C:F-actin capping protein complex"/>
    <property type="evidence" value="ECO:0000314"/>
    <property type="project" value="dictyBase"/>
</dbReference>
<dbReference type="GO" id="GO:0051015">
    <property type="term" value="F:actin filament binding"/>
    <property type="evidence" value="ECO:0000314"/>
    <property type="project" value="dictyBase"/>
</dbReference>
<dbReference type="GO" id="GO:0008289">
    <property type="term" value="F:lipid binding"/>
    <property type="evidence" value="ECO:0000315"/>
    <property type="project" value="DisProt"/>
</dbReference>
<dbReference type="GO" id="GO:0030036">
    <property type="term" value="P:actin cytoskeleton organization"/>
    <property type="evidence" value="ECO:0000304"/>
    <property type="project" value="dictyBase"/>
</dbReference>
<dbReference type="GO" id="GO:0051016">
    <property type="term" value="P:barbed-end actin filament capping"/>
    <property type="evidence" value="ECO:0000314"/>
    <property type="project" value="dictyBase"/>
</dbReference>
<dbReference type="GO" id="GO:0000902">
    <property type="term" value="P:cell morphogenesis"/>
    <property type="evidence" value="ECO:0000318"/>
    <property type="project" value="GO_Central"/>
</dbReference>
<dbReference type="GO" id="GO:0009617">
    <property type="term" value="P:response to bacterium"/>
    <property type="evidence" value="ECO:0007007"/>
    <property type="project" value="dictyBase"/>
</dbReference>
<dbReference type="FunFam" id="1.20.58.570:FF:000001">
    <property type="entry name" value="F-actin-capping protein subunit beta"/>
    <property type="match status" value="1"/>
</dbReference>
<dbReference type="FunFam" id="3.90.1150.210:FF:000019">
    <property type="entry name" value="F-actin-capping protein subunit beta"/>
    <property type="match status" value="1"/>
</dbReference>
<dbReference type="Gene3D" id="1.20.58.570">
    <property type="match status" value="1"/>
</dbReference>
<dbReference type="Gene3D" id="3.90.1150.210">
    <property type="entry name" value="F-actin capping protein, beta subunit"/>
    <property type="match status" value="1"/>
</dbReference>
<dbReference type="InterPro" id="IPR037282">
    <property type="entry name" value="CapZ_alpha/beta"/>
</dbReference>
<dbReference type="InterPro" id="IPR042276">
    <property type="entry name" value="CapZ_alpha/beta_2"/>
</dbReference>
<dbReference type="InterPro" id="IPR001698">
    <property type="entry name" value="CAPZB"/>
</dbReference>
<dbReference type="InterPro" id="IPR043175">
    <property type="entry name" value="CAPZB_N"/>
</dbReference>
<dbReference type="InterPro" id="IPR019771">
    <property type="entry name" value="F-actin_capping_bsu_CS"/>
</dbReference>
<dbReference type="PANTHER" id="PTHR10619">
    <property type="entry name" value="F-ACTIN-CAPPING PROTEIN SUBUNIT BETA"/>
    <property type="match status" value="1"/>
</dbReference>
<dbReference type="PANTHER" id="PTHR10619:SF0">
    <property type="entry name" value="F-ACTIN-CAPPING PROTEIN SUBUNIT BETA ISOFORMS 1 AND 2"/>
    <property type="match status" value="1"/>
</dbReference>
<dbReference type="Pfam" id="PF01115">
    <property type="entry name" value="F_actin_cap_B"/>
    <property type="match status" value="1"/>
</dbReference>
<dbReference type="PRINTS" id="PR00192">
    <property type="entry name" value="FACTINCAPB"/>
</dbReference>
<dbReference type="SUPFAM" id="SSF90096">
    <property type="entry name" value="Subunits of heterodimeric actin filament capping protein Capz"/>
    <property type="match status" value="1"/>
</dbReference>
<dbReference type="PROSITE" id="PS00231">
    <property type="entry name" value="F_ACTIN_CAPPING_BETA"/>
    <property type="match status" value="1"/>
</dbReference>
<gene>
    <name type="primary">acpA</name>
    <name type="synonym">abpE</name>
    <name type="ORF">DDB_G0267374</name>
</gene>
<organism>
    <name type="scientific">Dictyostelium discoideum</name>
    <name type="common">Social amoeba</name>
    <dbReference type="NCBI Taxonomy" id="44689"/>
    <lineage>
        <taxon>Eukaryota</taxon>
        <taxon>Amoebozoa</taxon>
        <taxon>Evosea</taxon>
        <taxon>Eumycetozoa</taxon>
        <taxon>Dictyostelia</taxon>
        <taxon>Dictyosteliales</taxon>
        <taxon>Dictyosteliaceae</taxon>
        <taxon>Dictyostelium</taxon>
    </lineage>
</organism>
<comment type="function">
    <text evidence="2">F-actin-capping proteins bind in a Ca(2+)-independent manner to the fast growing ends of actin filaments (barbed end) thereby blocking the exchange of subunits at these ends. Unlike other capping proteins (such as gelsolin and severin), these proteins do not sever actin filaments.</text>
</comment>
<comment type="subunit">
    <text>Component of the F-actin capping complex, composed of a heterodimer of an alpha and a beta subunit.</text>
</comment>
<comment type="subcellular location">
    <subcellularLocation>
        <location evidence="1">Cytoplasm</location>
        <location evidence="1">Cytoskeleton</location>
    </subcellularLocation>
</comment>
<comment type="similarity">
    <text evidence="3">Belongs to the F-actin-capping protein beta subunit family.</text>
</comment>
<sequence>MTEKQLSCCLDLMRRLPPSQIEDNLAGLLDLVPDLTEDLLSSIDQPLKVAYDAVSKKDYLLCDYNRDADSYRSPWSNKYDPPLSGACYPSSKLRDIEVQANEIFEIYLNLYFEGGVSSVYCWDLDDNFAAVVLMKKTQDQSKKGQPMRGTWDSIHVVEVKLGKKDKAVYKLTSTVMLSIETDNDNTGKVNLAGSLTRQDEKEYTFNEVDTHCVNIGKMVEDMESKLRQTLETIYFGKTKEVVNTLRNATGNSELEKRKNLSNQIGSAIGNRG</sequence>
<protein>
    <recommendedName>
        <fullName>F-actin-capping protein subunit beta</fullName>
    </recommendedName>
    <alternativeName>
        <fullName>Aginactin subunit beta</fullName>
    </alternativeName>
    <alternativeName>
        <fullName>CAP32</fullName>
    </alternativeName>
</protein>
<accession>P13021</accession>
<accession>Q55FA3</accession>
<proteinExistence type="evidence at protein level"/>
<feature type="chain" id="PRO_0000204638" description="F-actin-capping protein subunit beta">
    <location>
        <begin position="1"/>
        <end position="272"/>
    </location>
</feature>
<feature type="helix" evidence="4">
    <location>
        <begin position="3"/>
        <end position="15"/>
    </location>
</feature>
<feature type="helix" evidence="4">
    <location>
        <begin position="18"/>
        <end position="20"/>
    </location>
</feature>
<feature type="helix" evidence="4">
    <location>
        <begin position="21"/>
        <end position="31"/>
    </location>
</feature>
<feature type="helix" evidence="4">
    <location>
        <begin position="33"/>
        <end position="35"/>
    </location>
</feature>
<feature type="helix" evidence="4">
    <location>
        <begin position="36"/>
        <end position="42"/>
    </location>
</feature>
<feature type="strand" evidence="4">
    <location>
        <begin position="48"/>
        <end position="52"/>
    </location>
</feature>
<feature type="turn" evidence="4">
    <location>
        <begin position="53"/>
        <end position="56"/>
    </location>
</feature>
<feature type="strand" evidence="4">
    <location>
        <begin position="57"/>
        <end position="61"/>
    </location>
</feature>
<feature type="helix" evidence="4">
    <location>
        <begin position="63"/>
        <end position="65"/>
    </location>
</feature>
<feature type="strand" evidence="4">
    <location>
        <begin position="70"/>
        <end position="72"/>
    </location>
</feature>
<feature type="turn" evidence="4">
    <location>
        <begin position="74"/>
        <end position="76"/>
    </location>
</feature>
<feature type="strand" evidence="4">
    <location>
        <begin position="79"/>
        <end position="81"/>
    </location>
</feature>
<feature type="helix" evidence="4">
    <location>
        <begin position="91"/>
        <end position="112"/>
    </location>
</feature>
<feature type="strand" evidence="4">
    <location>
        <begin position="113"/>
        <end position="124"/>
    </location>
</feature>
<feature type="strand" evidence="4">
    <location>
        <begin position="127"/>
        <end position="138"/>
    </location>
</feature>
<feature type="strand" evidence="4">
    <location>
        <begin position="147"/>
        <end position="162"/>
    </location>
</feature>
<feature type="turn" evidence="4">
    <location>
        <begin position="163"/>
        <end position="165"/>
    </location>
</feature>
<feature type="strand" evidence="4">
    <location>
        <begin position="166"/>
        <end position="183"/>
    </location>
</feature>
<feature type="turn" evidence="4">
    <location>
        <begin position="184"/>
        <end position="186"/>
    </location>
</feature>
<feature type="strand" evidence="4">
    <location>
        <begin position="187"/>
        <end position="204"/>
    </location>
</feature>
<feature type="strand" evidence="4">
    <location>
        <begin position="207"/>
        <end position="209"/>
    </location>
</feature>
<feature type="helix" evidence="4">
    <location>
        <begin position="211"/>
        <end position="235"/>
    </location>
</feature>
<feature type="helix" evidence="4">
    <location>
        <begin position="237"/>
        <end position="245"/>
    </location>
</feature>
<keyword id="KW-0002">3D-structure</keyword>
<keyword id="KW-0117">Actin capping</keyword>
<keyword id="KW-0009">Actin-binding</keyword>
<keyword id="KW-0963">Cytoplasm</keyword>
<keyword id="KW-0206">Cytoskeleton</keyword>
<keyword id="KW-0903">Direct protein sequencing</keyword>
<keyword id="KW-1185">Reference proteome</keyword>
<name>CAPZB_DICDI</name>